<dbReference type="EC" id="7.6.2.5" evidence="1"/>
<dbReference type="EMBL" id="CP000034">
    <property type="protein sequence ID" value="ABB61054.1"/>
    <property type="status" value="ALT_INIT"/>
    <property type="molecule type" value="Genomic_DNA"/>
</dbReference>
<dbReference type="RefSeq" id="WP_000525607.1">
    <property type="nucleotide sequence ID" value="NC_007606.1"/>
</dbReference>
<dbReference type="RefSeq" id="YP_402545.1">
    <property type="nucleotide sequence ID" value="NC_007606.1"/>
</dbReference>
<dbReference type="SMR" id="Q32I01"/>
<dbReference type="STRING" id="300267.SDY_0877"/>
<dbReference type="EnsemblBacteria" id="ABB61054">
    <property type="protein sequence ID" value="ABB61054"/>
    <property type="gene ID" value="SDY_0877"/>
</dbReference>
<dbReference type="KEGG" id="sdy:SDY_0877"/>
<dbReference type="PATRIC" id="fig|300267.13.peg.1012"/>
<dbReference type="HOGENOM" id="CLU_000604_1_2_6"/>
<dbReference type="Proteomes" id="UP000002716">
    <property type="component" value="Chromosome"/>
</dbReference>
<dbReference type="GO" id="GO:0005886">
    <property type="term" value="C:plasma membrane"/>
    <property type="evidence" value="ECO:0007669"/>
    <property type="project" value="UniProtKB-SubCell"/>
</dbReference>
<dbReference type="GO" id="GO:0015439">
    <property type="term" value="F:ABC-type heme transporter activity"/>
    <property type="evidence" value="ECO:0007669"/>
    <property type="project" value="UniProtKB-EC"/>
</dbReference>
<dbReference type="GO" id="GO:0005524">
    <property type="term" value="F:ATP binding"/>
    <property type="evidence" value="ECO:0007669"/>
    <property type="project" value="UniProtKB-KW"/>
</dbReference>
<dbReference type="GO" id="GO:0016887">
    <property type="term" value="F:ATP hydrolysis activity"/>
    <property type="evidence" value="ECO:0007669"/>
    <property type="project" value="InterPro"/>
</dbReference>
<dbReference type="GO" id="GO:0017004">
    <property type="term" value="P:cytochrome complex assembly"/>
    <property type="evidence" value="ECO:0007669"/>
    <property type="project" value="UniProtKB-KW"/>
</dbReference>
<dbReference type="CDD" id="cd03231">
    <property type="entry name" value="ABC_CcmA_heme_exporter"/>
    <property type="match status" value="1"/>
</dbReference>
<dbReference type="FunFam" id="3.40.50.300:FF:001098">
    <property type="entry name" value="Cytochrome c biogenesis ATP-binding export protein CcmA"/>
    <property type="match status" value="1"/>
</dbReference>
<dbReference type="Gene3D" id="3.40.50.300">
    <property type="entry name" value="P-loop containing nucleotide triphosphate hydrolases"/>
    <property type="match status" value="1"/>
</dbReference>
<dbReference type="InterPro" id="IPR003593">
    <property type="entry name" value="AAA+_ATPase"/>
</dbReference>
<dbReference type="InterPro" id="IPR003439">
    <property type="entry name" value="ABC_transporter-like_ATP-bd"/>
</dbReference>
<dbReference type="InterPro" id="IPR017871">
    <property type="entry name" value="ABC_transporter-like_CS"/>
</dbReference>
<dbReference type="InterPro" id="IPR005895">
    <property type="entry name" value="ABC_transptr_haem_export_CcmA"/>
</dbReference>
<dbReference type="InterPro" id="IPR027417">
    <property type="entry name" value="P-loop_NTPase"/>
</dbReference>
<dbReference type="NCBIfam" id="TIGR01189">
    <property type="entry name" value="ccmA"/>
    <property type="match status" value="1"/>
</dbReference>
<dbReference type="NCBIfam" id="NF010061">
    <property type="entry name" value="PRK13538.1"/>
    <property type="match status" value="1"/>
</dbReference>
<dbReference type="PANTHER" id="PTHR43499">
    <property type="entry name" value="ABC TRANSPORTER I FAMILY MEMBER 1"/>
    <property type="match status" value="1"/>
</dbReference>
<dbReference type="PANTHER" id="PTHR43499:SF1">
    <property type="entry name" value="ABC TRANSPORTER I FAMILY MEMBER 1"/>
    <property type="match status" value="1"/>
</dbReference>
<dbReference type="Pfam" id="PF00005">
    <property type="entry name" value="ABC_tran"/>
    <property type="match status" value="1"/>
</dbReference>
<dbReference type="SMART" id="SM00382">
    <property type="entry name" value="AAA"/>
    <property type="match status" value="1"/>
</dbReference>
<dbReference type="SUPFAM" id="SSF52540">
    <property type="entry name" value="P-loop containing nucleoside triphosphate hydrolases"/>
    <property type="match status" value="1"/>
</dbReference>
<dbReference type="PROSITE" id="PS00211">
    <property type="entry name" value="ABC_TRANSPORTER_1"/>
    <property type="match status" value="1"/>
</dbReference>
<dbReference type="PROSITE" id="PS50893">
    <property type="entry name" value="ABC_TRANSPORTER_2"/>
    <property type="match status" value="1"/>
</dbReference>
<dbReference type="PROSITE" id="PS51243">
    <property type="entry name" value="CCMA"/>
    <property type="match status" value="1"/>
</dbReference>
<reference key="1">
    <citation type="journal article" date="2005" name="Nucleic Acids Res.">
        <title>Genome dynamics and diversity of Shigella species, the etiologic agents of bacillary dysentery.</title>
        <authorList>
            <person name="Yang F."/>
            <person name="Yang J."/>
            <person name="Zhang X."/>
            <person name="Chen L."/>
            <person name="Jiang Y."/>
            <person name="Yan Y."/>
            <person name="Tang X."/>
            <person name="Wang J."/>
            <person name="Xiong Z."/>
            <person name="Dong J."/>
            <person name="Xue Y."/>
            <person name="Zhu Y."/>
            <person name="Xu X."/>
            <person name="Sun L."/>
            <person name="Chen S."/>
            <person name="Nie H."/>
            <person name="Peng J."/>
            <person name="Xu J."/>
            <person name="Wang Y."/>
            <person name="Yuan Z."/>
            <person name="Wen Y."/>
            <person name="Yao Z."/>
            <person name="Shen Y."/>
            <person name="Qiang B."/>
            <person name="Hou Y."/>
            <person name="Yu J."/>
            <person name="Jin Q."/>
        </authorList>
    </citation>
    <scope>NUCLEOTIDE SEQUENCE [LARGE SCALE GENOMIC DNA]</scope>
    <source>
        <strain>Sd197</strain>
    </source>
</reference>
<protein>
    <recommendedName>
        <fullName evidence="1">Cytochrome c biogenesis ATP-binding export protein CcmA</fullName>
        <ecNumber evidence="1">7.6.2.5</ecNumber>
    </recommendedName>
    <alternativeName>
        <fullName evidence="1">Heme exporter protein A</fullName>
    </alternativeName>
</protein>
<gene>
    <name evidence="1" type="primary">ccmA</name>
    <name type="ordered locus">SDY_0877</name>
</gene>
<accession>Q32I01</accession>
<feature type="chain" id="PRO_0000271960" description="Cytochrome c biogenesis ATP-binding export protein CcmA">
    <location>
        <begin position="1"/>
        <end position="207"/>
    </location>
</feature>
<feature type="domain" description="ABC transporter" evidence="1">
    <location>
        <begin position="4"/>
        <end position="207"/>
    </location>
</feature>
<feature type="binding site" evidence="1">
    <location>
        <begin position="36"/>
        <end position="43"/>
    </location>
    <ligand>
        <name>ATP</name>
        <dbReference type="ChEBI" id="CHEBI:30616"/>
    </ligand>
</feature>
<proteinExistence type="inferred from homology"/>
<comment type="function">
    <text evidence="1">Part of the ABC transporter complex CcmAB involved in the biogenesis of c-type cytochromes; once thought to export heme, this seems not to be the case, but its exact role is uncertain. Responsible for energy coupling to the transport system.</text>
</comment>
<comment type="catalytic activity">
    <reaction evidence="1">
        <text>heme b(in) + ATP + H2O = heme b(out) + ADP + phosphate + H(+)</text>
        <dbReference type="Rhea" id="RHEA:19261"/>
        <dbReference type="ChEBI" id="CHEBI:15377"/>
        <dbReference type="ChEBI" id="CHEBI:15378"/>
        <dbReference type="ChEBI" id="CHEBI:30616"/>
        <dbReference type="ChEBI" id="CHEBI:43474"/>
        <dbReference type="ChEBI" id="CHEBI:60344"/>
        <dbReference type="ChEBI" id="CHEBI:456216"/>
        <dbReference type="EC" id="7.6.2.5"/>
    </reaction>
</comment>
<comment type="subunit">
    <text evidence="1">The complex is composed of two ATP-binding proteins (CcmA) and two transmembrane proteins (CcmB).</text>
</comment>
<comment type="subcellular location">
    <subcellularLocation>
        <location evidence="1">Cell inner membrane</location>
        <topology evidence="1">Peripheral membrane protein</topology>
    </subcellularLocation>
</comment>
<comment type="similarity">
    <text evidence="1">Belongs to the ABC transporter superfamily. CcmA exporter (TC 3.A.1.107) family.</text>
</comment>
<comment type="sequence caution" evidence="2">
    <conflict type="erroneous initiation">
        <sequence resource="EMBL-CDS" id="ABB61054"/>
    </conflict>
</comment>
<evidence type="ECO:0000255" key="1">
    <source>
        <dbReference type="HAMAP-Rule" id="MF_01707"/>
    </source>
</evidence>
<evidence type="ECO:0000305" key="2"/>
<keyword id="KW-0067">ATP-binding</keyword>
<keyword id="KW-0997">Cell inner membrane</keyword>
<keyword id="KW-1003">Cell membrane</keyword>
<keyword id="KW-0201">Cytochrome c-type biogenesis</keyword>
<keyword id="KW-0472">Membrane</keyword>
<keyword id="KW-0547">Nucleotide-binding</keyword>
<keyword id="KW-1185">Reference proteome</keyword>
<keyword id="KW-1278">Translocase</keyword>
<keyword id="KW-0813">Transport</keyword>
<name>CCMA_SHIDS</name>
<organism>
    <name type="scientific">Shigella dysenteriae serotype 1 (strain Sd197)</name>
    <dbReference type="NCBI Taxonomy" id="300267"/>
    <lineage>
        <taxon>Bacteria</taxon>
        <taxon>Pseudomonadati</taxon>
        <taxon>Pseudomonadota</taxon>
        <taxon>Gammaproteobacteria</taxon>
        <taxon>Enterobacterales</taxon>
        <taxon>Enterobacteriaceae</taxon>
        <taxon>Shigella</taxon>
    </lineage>
</organism>
<sequence length="207" mass="23139">MGMLEVRELLCERDERTLFSGLSFTLNAGEWVQITGSNGAGKTMLLRLLTGLSRPDAGEVLWQGQPLHQVRDSYHQNLLWIGHQPGIKTRLTALENLHFYHRDGDTAQCLEALAQAGLAGFEDIPVNQLSAGQQRRVALARLWLTRATLWILDEPFTAIDVNGVDRLTQRMAQHTEQGGIVILTTHQPLNVAESKIRRISLTQTRAV</sequence>